<feature type="signal peptide" evidence="2">
    <location>
        <begin position="1"/>
        <end position="22"/>
    </location>
</feature>
<feature type="chain" id="PRO_0000365517" description="Germin-like protein 8-5">
    <location>
        <begin position="23"/>
        <end position="224"/>
    </location>
</feature>
<feature type="domain" description="Cupin type-1" evidence="2">
    <location>
        <begin position="62"/>
        <end position="212"/>
    </location>
</feature>
<feature type="binding site" evidence="1">
    <location>
        <position position="109"/>
    </location>
    <ligand>
        <name>Mn(2+)</name>
        <dbReference type="ChEBI" id="CHEBI:29035"/>
    </ligand>
</feature>
<feature type="binding site" evidence="1">
    <location>
        <position position="111"/>
    </location>
    <ligand>
        <name>Mn(2+)</name>
        <dbReference type="ChEBI" id="CHEBI:29035"/>
    </ligand>
</feature>
<feature type="binding site" evidence="1">
    <location>
        <position position="116"/>
    </location>
    <ligand>
        <name>Mn(2+)</name>
        <dbReference type="ChEBI" id="CHEBI:29035"/>
    </ligand>
</feature>
<feature type="binding site" evidence="1">
    <location>
        <position position="157"/>
    </location>
    <ligand>
        <name>Mn(2+)</name>
        <dbReference type="ChEBI" id="CHEBI:29035"/>
    </ligand>
</feature>
<feature type="glycosylation site" description="N-linked (GlcNAc...) asparagine" evidence="2">
    <location>
        <position position="76"/>
    </location>
</feature>
<feature type="glycosylation site" description="N-linked (GlcNAc...) asparagine" evidence="2">
    <location>
        <position position="135"/>
    </location>
</feature>
<feature type="disulfide bond" evidence="1">
    <location>
        <begin position="32"/>
        <end position="47"/>
    </location>
</feature>
<accession>Q6YZA6</accession>
<accession>A0A0P0XCH1</accession>
<organism>
    <name type="scientific">Oryza sativa subsp. japonica</name>
    <name type="common">Rice</name>
    <dbReference type="NCBI Taxonomy" id="39947"/>
    <lineage>
        <taxon>Eukaryota</taxon>
        <taxon>Viridiplantae</taxon>
        <taxon>Streptophyta</taxon>
        <taxon>Embryophyta</taxon>
        <taxon>Tracheophyta</taxon>
        <taxon>Spermatophyta</taxon>
        <taxon>Magnoliopsida</taxon>
        <taxon>Liliopsida</taxon>
        <taxon>Poales</taxon>
        <taxon>Poaceae</taxon>
        <taxon>BOP clade</taxon>
        <taxon>Oryzoideae</taxon>
        <taxon>Oryzeae</taxon>
        <taxon>Oryzinae</taxon>
        <taxon>Oryza</taxon>
        <taxon>Oryza sativa</taxon>
    </lineage>
</organism>
<gene>
    <name type="ordered locus">Os08g0189400</name>
    <name type="ordered locus">LOC_Os08g08990</name>
    <name type="ORF">B1099H05.29</name>
    <name type="ORF">OsJ_025244</name>
    <name type="ORF">P0610E02.5</name>
</gene>
<proteinExistence type="evidence at transcript level"/>
<reference key="1">
    <citation type="journal article" date="2005" name="Nature">
        <title>The map-based sequence of the rice genome.</title>
        <authorList>
            <consortium name="International rice genome sequencing project (IRGSP)"/>
        </authorList>
    </citation>
    <scope>NUCLEOTIDE SEQUENCE [LARGE SCALE GENOMIC DNA]</scope>
    <source>
        <strain>cv. Nipponbare</strain>
    </source>
</reference>
<reference key="2">
    <citation type="journal article" date="2008" name="Nucleic Acids Res.">
        <title>The rice annotation project database (RAP-DB): 2008 update.</title>
        <authorList>
            <consortium name="The rice annotation project (RAP)"/>
        </authorList>
    </citation>
    <scope>GENOME REANNOTATION</scope>
    <source>
        <strain>cv. Nipponbare</strain>
    </source>
</reference>
<reference key="3">
    <citation type="journal article" date="2013" name="Rice">
        <title>Improvement of the Oryza sativa Nipponbare reference genome using next generation sequence and optical map data.</title>
        <authorList>
            <person name="Kawahara Y."/>
            <person name="de la Bastide M."/>
            <person name="Hamilton J.P."/>
            <person name="Kanamori H."/>
            <person name="McCombie W.R."/>
            <person name="Ouyang S."/>
            <person name="Schwartz D.C."/>
            <person name="Tanaka T."/>
            <person name="Wu J."/>
            <person name="Zhou S."/>
            <person name="Childs K.L."/>
            <person name="Davidson R.M."/>
            <person name="Lin H."/>
            <person name="Quesada-Ocampo L."/>
            <person name="Vaillancourt B."/>
            <person name="Sakai H."/>
            <person name="Lee S.S."/>
            <person name="Kim J."/>
            <person name="Numa H."/>
            <person name="Itoh T."/>
            <person name="Buell C.R."/>
            <person name="Matsumoto T."/>
        </authorList>
    </citation>
    <scope>GENOME REANNOTATION</scope>
    <source>
        <strain>cv. Nipponbare</strain>
    </source>
</reference>
<reference key="4">
    <citation type="journal article" date="2005" name="PLoS Biol.">
        <title>The genomes of Oryza sativa: a history of duplications.</title>
        <authorList>
            <person name="Yu J."/>
            <person name="Wang J."/>
            <person name="Lin W."/>
            <person name="Li S."/>
            <person name="Li H."/>
            <person name="Zhou J."/>
            <person name="Ni P."/>
            <person name="Dong W."/>
            <person name="Hu S."/>
            <person name="Zeng C."/>
            <person name="Zhang J."/>
            <person name="Zhang Y."/>
            <person name="Li R."/>
            <person name="Xu Z."/>
            <person name="Li S."/>
            <person name="Li X."/>
            <person name="Zheng H."/>
            <person name="Cong L."/>
            <person name="Lin L."/>
            <person name="Yin J."/>
            <person name="Geng J."/>
            <person name="Li G."/>
            <person name="Shi J."/>
            <person name="Liu J."/>
            <person name="Lv H."/>
            <person name="Li J."/>
            <person name="Wang J."/>
            <person name="Deng Y."/>
            <person name="Ran L."/>
            <person name="Shi X."/>
            <person name="Wang X."/>
            <person name="Wu Q."/>
            <person name="Li C."/>
            <person name="Ren X."/>
            <person name="Wang J."/>
            <person name="Wang X."/>
            <person name="Li D."/>
            <person name="Liu D."/>
            <person name="Zhang X."/>
            <person name="Ji Z."/>
            <person name="Zhao W."/>
            <person name="Sun Y."/>
            <person name="Zhang Z."/>
            <person name="Bao J."/>
            <person name="Han Y."/>
            <person name="Dong L."/>
            <person name="Ji J."/>
            <person name="Chen P."/>
            <person name="Wu S."/>
            <person name="Liu J."/>
            <person name="Xiao Y."/>
            <person name="Bu D."/>
            <person name="Tan J."/>
            <person name="Yang L."/>
            <person name="Ye C."/>
            <person name="Zhang J."/>
            <person name="Xu J."/>
            <person name="Zhou Y."/>
            <person name="Yu Y."/>
            <person name="Zhang B."/>
            <person name="Zhuang S."/>
            <person name="Wei H."/>
            <person name="Liu B."/>
            <person name="Lei M."/>
            <person name="Yu H."/>
            <person name="Li Y."/>
            <person name="Xu H."/>
            <person name="Wei S."/>
            <person name="He X."/>
            <person name="Fang L."/>
            <person name="Zhang Z."/>
            <person name="Zhang Y."/>
            <person name="Huang X."/>
            <person name="Su Z."/>
            <person name="Tong W."/>
            <person name="Li J."/>
            <person name="Tong Z."/>
            <person name="Li S."/>
            <person name="Ye J."/>
            <person name="Wang L."/>
            <person name="Fang L."/>
            <person name="Lei T."/>
            <person name="Chen C.-S."/>
            <person name="Chen H.-C."/>
            <person name="Xu Z."/>
            <person name="Li H."/>
            <person name="Huang H."/>
            <person name="Zhang F."/>
            <person name="Xu H."/>
            <person name="Li N."/>
            <person name="Zhao C."/>
            <person name="Li S."/>
            <person name="Dong L."/>
            <person name="Huang Y."/>
            <person name="Li L."/>
            <person name="Xi Y."/>
            <person name="Qi Q."/>
            <person name="Li W."/>
            <person name="Zhang B."/>
            <person name="Hu W."/>
            <person name="Zhang Y."/>
            <person name="Tian X."/>
            <person name="Jiao Y."/>
            <person name="Liang X."/>
            <person name="Jin J."/>
            <person name="Gao L."/>
            <person name="Zheng W."/>
            <person name="Hao B."/>
            <person name="Liu S.-M."/>
            <person name="Wang W."/>
            <person name="Yuan L."/>
            <person name="Cao M."/>
            <person name="McDermott J."/>
            <person name="Samudrala R."/>
            <person name="Wang J."/>
            <person name="Wong G.K.-S."/>
            <person name="Yang H."/>
        </authorList>
    </citation>
    <scope>NUCLEOTIDE SEQUENCE [LARGE SCALE GENOMIC DNA]</scope>
    <source>
        <strain>cv. Nipponbare</strain>
    </source>
</reference>
<reference key="5">
    <citation type="journal article" date="2009" name="Plant Physiol.">
        <title>A germin-like protein gene family functions as a complex quantitative trait locus conferring broad-spectrum disease resistance in rice.</title>
        <authorList>
            <person name="Manosalva P.M."/>
            <person name="Davidson R.M."/>
            <person name="Liu B."/>
            <person name="Zhu X."/>
            <person name="Hulbert S.H."/>
            <person name="Leung H."/>
            <person name="Leach J.E."/>
        </authorList>
    </citation>
    <scope>FUNCTION</scope>
</reference>
<evidence type="ECO:0000250" key="1"/>
<evidence type="ECO:0000255" key="2"/>
<evidence type="ECO:0000269" key="3">
    <source>
    </source>
</evidence>
<evidence type="ECO:0000305" key="4"/>
<keyword id="KW-0052">Apoplast</keyword>
<keyword id="KW-1015">Disulfide bond</keyword>
<keyword id="KW-0325">Glycoprotein</keyword>
<keyword id="KW-0464">Manganese</keyword>
<keyword id="KW-0479">Metal-binding</keyword>
<keyword id="KW-1185">Reference proteome</keyword>
<keyword id="KW-0964">Secreted</keyword>
<keyword id="KW-0732">Signal</keyword>
<comment type="function">
    <text evidence="3">Plays a role in broad-spectrum disease resistance. Probably has no oxalate oxidase activity even if the active site is conserved.</text>
</comment>
<comment type="subunit">
    <text evidence="1">Oligomer (believed to be a pentamer but probably hexamer).</text>
</comment>
<comment type="subcellular location">
    <subcellularLocation>
        <location evidence="1">Secreted</location>
        <location evidence="1">Extracellular space</location>
        <location evidence="1">Apoplast</location>
    </subcellularLocation>
</comment>
<comment type="miscellaneous">
    <text>Member of the 12 germin-like protein gene cluster located on chromosome 8 in the major-effect quantitative trait loci (QTL) for fungal blast resistance. Partial suppression of the 12 germin-like protein genes increases susceptibility to the fungal pathogens causing rice blast and sheath blight diseases.</text>
</comment>
<comment type="similarity">
    <text evidence="4">Belongs to the germin family.</text>
</comment>
<comment type="sequence caution" evidence="4">
    <conflict type="erroneous initiation">
        <sequence resource="EMBL-CDS" id="BAF23073"/>
    </conflict>
    <text>Truncated N-terminus.</text>
</comment>
<name>GL85_ORYSJ</name>
<dbReference type="EMBL" id="AP005505">
    <property type="protein sequence ID" value="BAD05732.1"/>
    <property type="molecule type" value="Genomic_DNA"/>
</dbReference>
<dbReference type="EMBL" id="AP005531">
    <property type="protein sequence ID" value="BAD05771.1"/>
    <property type="molecule type" value="Genomic_DNA"/>
</dbReference>
<dbReference type="EMBL" id="AP008214">
    <property type="protein sequence ID" value="BAF23073.2"/>
    <property type="status" value="ALT_INIT"/>
    <property type="molecule type" value="Genomic_DNA"/>
</dbReference>
<dbReference type="EMBL" id="AP014964">
    <property type="protein sequence ID" value="BAT04152.1"/>
    <property type="molecule type" value="Genomic_DNA"/>
</dbReference>
<dbReference type="EMBL" id="CM000145">
    <property type="status" value="NOT_ANNOTATED_CDS"/>
    <property type="molecule type" value="Genomic_DNA"/>
</dbReference>
<dbReference type="RefSeq" id="XP_015650206.1">
    <property type="nucleotide sequence ID" value="XM_015794720.1"/>
</dbReference>
<dbReference type="SMR" id="Q6YZA6"/>
<dbReference type="FunCoup" id="Q6YZA6">
    <property type="interactions" value="40"/>
</dbReference>
<dbReference type="STRING" id="39947.Q6YZA6"/>
<dbReference type="PaxDb" id="39947-Q6YZA6"/>
<dbReference type="EnsemblPlants" id="Os08t0189400-01">
    <property type="protein sequence ID" value="Os08t0189400-01"/>
    <property type="gene ID" value="Os08g0189400"/>
</dbReference>
<dbReference type="Gramene" id="Os08t0189400-01">
    <property type="protein sequence ID" value="Os08t0189400-01"/>
    <property type="gene ID" value="Os08g0189400"/>
</dbReference>
<dbReference type="KEGG" id="dosa:Os08g0189400"/>
<dbReference type="HOGENOM" id="CLU_015790_0_0_1"/>
<dbReference type="InParanoid" id="Q6YZA6"/>
<dbReference type="OMA" id="VTHATNR"/>
<dbReference type="OrthoDB" id="1850619at2759"/>
<dbReference type="Proteomes" id="UP000000763">
    <property type="component" value="Chromosome 8"/>
</dbReference>
<dbReference type="Proteomes" id="UP000007752">
    <property type="component" value="Chromosome 8"/>
</dbReference>
<dbReference type="Proteomes" id="UP000059680">
    <property type="component" value="Chromosome 8"/>
</dbReference>
<dbReference type="GO" id="GO:0048046">
    <property type="term" value="C:apoplast"/>
    <property type="evidence" value="ECO:0007669"/>
    <property type="project" value="UniProtKB-SubCell"/>
</dbReference>
<dbReference type="GO" id="GO:0030145">
    <property type="term" value="F:manganese ion binding"/>
    <property type="evidence" value="ECO:0007669"/>
    <property type="project" value="InterPro"/>
</dbReference>
<dbReference type="CDD" id="cd02241">
    <property type="entry name" value="cupin_OxOx"/>
    <property type="match status" value="1"/>
</dbReference>
<dbReference type="FunFam" id="2.60.120.10:FF:000005">
    <property type="entry name" value="Germin-like protein subfamily 1 member 8"/>
    <property type="match status" value="1"/>
</dbReference>
<dbReference type="Gene3D" id="2.60.120.10">
    <property type="entry name" value="Jelly Rolls"/>
    <property type="match status" value="1"/>
</dbReference>
<dbReference type="InterPro" id="IPR006045">
    <property type="entry name" value="Cupin_1"/>
</dbReference>
<dbReference type="InterPro" id="IPR001929">
    <property type="entry name" value="Germin"/>
</dbReference>
<dbReference type="InterPro" id="IPR019780">
    <property type="entry name" value="Germin_Mn-BS"/>
</dbReference>
<dbReference type="InterPro" id="IPR014710">
    <property type="entry name" value="RmlC-like_jellyroll"/>
</dbReference>
<dbReference type="InterPro" id="IPR011051">
    <property type="entry name" value="RmlC_Cupin_sf"/>
</dbReference>
<dbReference type="PANTHER" id="PTHR31238">
    <property type="entry name" value="GERMIN-LIKE PROTEIN SUBFAMILY 3 MEMBER 3"/>
    <property type="match status" value="1"/>
</dbReference>
<dbReference type="Pfam" id="PF00190">
    <property type="entry name" value="Cupin_1"/>
    <property type="match status" value="1"/>
</dbReference>
<dbReference type="PRINTS" id="PR00325">
    <property type="entry name" value="GERMIN"/>
</dbReference>
<dbReference type="SMART" id="SM00835">
    <property type="entry name" value="Cupin_1"/>
    <property type="match status" value="1"/>
</dbReference>
<dbReference type="SUPFAM" id="SSF51182">
    <property type="entry name" value="RmlC-like cupins"/>
    <property type="match status" value="1"/>
</dbReference>
<dbReference type="PROSITE" id="PS00725">
    <property type="entry name" value="GERMIN"/>
    <property type="match status" value="1"/>
</dbReference>
<protein>
    <recommendedName>
        <fullName>Germin-like protein 8-5</fullName>
    </recommendedName>
</protein>
<sequence>MASPSSLCLLAALALISWQAMASDPSPLQDFCVADMHSPVRVNGFACLNPMEVNADHFFKAAKLDTPRKTNKVGSNVTLINVMQIPGLNTLGISIARIDYAPLGQNPPHTHPRATEILTVLEGTLYVGFVTSNPNNTLFSKVLNKGDVFVFPQGLIHFQFNPNPHQPAVAIAALSSQNPGAITIANAVFGSKPPISDEVLAKAFQVEKGTIDWLQAQFWENNHY</sequence>